<proteinExistence type="inferred from homology"/>
<dbReference type="EC" id="2.7.7.77" evidence="1"/>
<dbReference type="EMBL" id="CP000931">
    <property type="protein sequence ID" value="ABZ74722.1"/>
    <property type="molecule type" value="Genomic_DNA"/>
</dbReference>
<dbReference type="RefSeq" id="WP_012275279.1">
    <property type="nucleotide sequence ID" value="NC_010334.1"/>
</dbReference>
<dbReference type="SMR" id="B0TN10"/>
<dbReference type="STRING" id="458817.Shal_0146"/>
<dbReference type="KEGG" id="shl:Shal_0146"/>
<dbReference type="eggNOG" id="COG0746">
    <property type="taxonomic scope" value="Bacteria"/>
</dbReference>
<dbReference type="HOGENOM" id="CLU_055597_5_1_6"/>
<dbReference type="OrthoDB" id="9788394at2"/>
<dbReference type="Proteomes" id="UP000001317">
    <property type="component" value="Chromosome"/>
</dbReference>
<dbReference type="GO" id="GO:0005737">
    <property type="term" value="C:cytoplasm"/>
    <property type="evidence" value="ECO:0007669"/>
    <property type="project" value="UniProtKB-SubCell"/>
</dbReference>
<dbReference type="GO" id="GO:0005525">
    <property type="term" value="F:GTP binding"/>
    <property type="evidence" value="ECO:0007669"/>
    <property type="project" value="UniProtKB-UniRule"/>
</dbReference>
<dbReference type="GO" id="GO:0046872">
    <property type="term" value="F:metal ion binding"/>
    <property type="evidence" value="ECO:0007669"/>
    <property type="project" value="UniProtKB-KW"/>
</dbReference>
<dbReference type="GO" id="GO:0061603">
    <property type="term" value="F:molybdenum cofactor guanylyltransferase activity"/>
    <property type="evidence" value="ECO:0007669"/>
    <property type="project" value="UniProtKB-EC"/>
</dbReference>
<dbReference type="GO" id="GO:1902758">
    <property type="term" value="P:bis(molybdopterin guanine dinucleotide)molybdenum biosynthetic process"/>
    <property type="evidence" value="ECO:0007669"/>
    <property type="project" value="TreeGrafter"/>
</dbReference>
<dbReference type="CDD" id="cd02503">
    <property type="entry name" value="MobA"/>
    <property type="match status" value="1"/>
</dbReference>
<dbReference type="Gene3D" id="3.90.550.10">
    <property type="entry name" value="Spore Coat Polysaccharide Biosynthesis Protein SpsA, Chain A"/>
    <property type="match status" value="1"/>
</dbReference>
<dbReference type="HAMAP" id="MF_00316">
    <property type="entry name" value="MobA"/>
    <property type="match status" value="1"/>
</dbReference>
<dbReference type="InterPro" id="IPR025877">
    <property type="entry name" value="MobA-like_NTP_Trfase"/>
</dbReference>
<dbReference type="InterPro" id="IPR013482">
    <property type="entry name" value="Molybde_CF_guanTrfase"/>
</dbReference>
<dbReference type="InterPro" id="IPR029044">
    <property type="entry name" value="Nucleotide-diphossugar_trans"/>
</dbReference>
<dbReference type="NCBIfam" id="TIGR02665">
    <property type="entry name" value="molyb_mobA"/>
    <property type="match status" value="1"/>
</dbReference>
<dbReference type="PANTHER" id="PTHR19136">
    <property type="entry name" value="MOLYBDENUM COFACTOR GUANYLYLTRANSFERASE"/>
    <property type="match status" value="1"/>
</dbReference>
<dbReference type="PANTHER" id="PTHR19136:SF81">
    <property type="entry name" value="MOLYBDENUM COFACTOR GUANYLYLTRANSFERASE"/>
    <property type="match status" value="1"/>
</dbReference>
<dbReference type="Pfam" id="PF12804">
    <property type="entry name" value="NTP_transf_3"/>
    <property type="match status" value="1"/>
</dbReference>
<dbReference type="SUPFAM" id="SSF53448">
    <property type="entry name" value="Nucleotide-diphospho-sugar transferases"/>
    <property type="match status" value="1"/>
</dbReference>
<comment type="function">
    <text evidence="1">Transfers a GMP moiety from GTP to Mo-molybdopterin (Mo-MPT) cofactor (Moco or molybdenum cofactor) to form Mo-molybdopterin guanine dinucleotide (Mo-MGD) cofactor.</text>
</comment>
<comment type="catalytic activity">
    <reaction evidence="1">
        <text>Mo-molybdopterin + GTP + H(+) = Mo-molybdopterin guanine dinucleotide + diphosphate</text>
        <dbReference type="Rhea" id="RHEA:34243"/>
        <dbReference type="ChEBI" id="CHEBI:15378"/>
        <dbReference type="ChEBI" id="CHEBI:33019"/>
        <dbReference type="ChEBI" id="CHEBI:37565"/>
        <dbReference type="ChEBI" id="CHEBI:71302"/>
        <dbReference type="ChEBI" id="CHEBI:71310"/>
        <dbReference type="EC" id="2.7.7.77"/>
    </reaction>
</comment>
<comment type="cofactor">
    <cofactor evidence="1">
        <name>Mg(2+)</name>
        <dbReference type="ChEBI" id="CHEBI:18420"/>
    </cofactor>
</comment>
<comment type="subunit">
    <text evidence="1">Monomer.</text>
</comment>
<comment type="subcellular location">
    <subcellularLocation>
        <location evidence="1">Cytoplasm</location>
    </subcellularLocation>
</comment>
<comment type="domain">
    <text evidence="1">The N-terminal domain determines nucleotide recognition and specific binding, while the C-terminal domain determines the specific binding to the target protein.</text>
</comment>
<comment type="similarity">
    <text evidence="1">Belongs to the MobA family.</text>
</comment>
<gene>
    <name evidence="1" type="primary">mobA</name>
    <name type="ordered locus">Shal_0146</name>
</gene>
<evidence type="ECO:0000255" key="1">
    <source>
        <dbReference type="HAMAP-Rule" id="MF_00316"/>
    </source>
</evidence>
<sequence>MTAQVDAVILAGGMARRMGGNDKGLVELENRPMIEHAIERIQPQVKEILINANRNQNRYSEFGFKVISDQDTGYLGPLAGMITAMSNTDAEYLLVIPCDCPLLPTDLVARMLAKLTAEDAELAVASDGKREQPVVMLLKPSLRASMKAFLDAGERKIDFWYAKHHYVVAEFSDQPNAFVNVNTPEQKQQLGEAIANEKNY</sequence>
<accession>B0TN10</accession>
<keyword id="KW-0963">Cytoplasm</keyword>
<keyword id="KW-0342">GTP-binding</keyword>
<keyword id="KW-0460">Magnesium</keyword>
<keyword id="KW-0479">Metal-binding</keyword>
<keyword id="KW-0501">Molybdenum cofactor biosynthesis</keyword>
<keyword id="KW-0547">Nucleotide-binding</keyword>
<keyword id="KW-0808">Transferase</keyword>
<name>MOBA_SHEHH</name>
<feature type="chain" id="PRO_1000079113" description="Molybdenum cofactor guanylyltransferase">
    <location>
        <begin position="1"/>
        <end position="200"/>
    </location>
</feature>
<feature type="binding site" evidence="1">
    <location>
        <begin position="10"/>
        <end position="12"/>
    </location>
    <ligand>
        <name>GTP</name>
        <dbReference type="ChEBI" id="CHEBI:37565"/>
    </ligand>
</feature>
<feature type="binding site" evidence="1">
    <location>
        <position position="23"/>
    </location>
    <ligand>
        <name>GTP</name>
        <dbReference type="ChEBI" id="CHEBI:37565"/>
    </ligand>
</feature>
<feature type="binding site" evidence="1">
    <location>
        <position position="51"/>
    </location>
    <ligand>
        <name>GTP</name>
        <dbReference type="ChEBI" id="CHEBI:37565"/>
    </ligand>
</feature>
<feature type="binding site" evidence="1">
    <location>
        <position position="69"/>
    </location>
    <ligand>
        <name>GTP</name>
        <dbReference type="ChEBI" id="CHEBI:37565"/>
    </ligand>
</feature>
<feature type="binding site" evidence="1">
    <location>
        <position position="99"/>
    </location>
    <ligand>
        <name>GTP</name>
        <dbReference type="ChEBI" id="CHEBI:37565"/>
    </ligand>
</feature>
<feature type="binding site" evidence="1">
    <location>
        <position position="99"/>
    </location>
    <ligand>
        <name>Mg(2+)</name>
        <dbReference type="ChEBI" id="CHEBI:18420"/>
    </ligand>
</feature>
<protein>
    <recommendedName>
        <fullName evidence="1">Molybdenum cofactor guanylyltransferase</fullName>
        <shortName evidence="1">MoCo guanylyltransferase</shortName>
        <ecNumber evidence="1">2.7.7.77</ecNumber>
    </recommendedName>
    <alternativeName>
        <fullName evidence="1">GTP:molybdopterin guanylyltransferase</fullName>
    </alternativeName>
    <alternativeName>
        <fullName evidence="1">Mo-MPT guanylyltransferase</fullName>
    </alternativeName>
    <alternativeName>
        <fullName evidence="1">Molybdopterin guanylyltransferase</fullName>
    </alternativeName>
    <alternativeName>
        <fullName evidence="1">Molybdopterin-guanine dinucleotide synthase</fullName>
        <shortName evidence="1">MGD synthase</shortName>
    </alternativeName>
</protein>
<organism>
    <name type="scientific">Shewanella halifaxensis (strain HAW-EB4)</name>
    <dbReference type="NCBI Taxonomy" id="458817"/>
    <lineage>
        <taxon>Bacteria</taxon>
        <taxon>Pseudomonadati</taxon>
        <taxon>Pseudomonadota</taxon>
        <taxon>Gammaproteobacteria</taxon>
        <taxon>Alteromonadales</taxon>
        <taxon>Shewanellaceae</taxon>
        <taxon>Shewanella</taxon>
    </lineage>
</organism>
<reference key="1">
    <citation type="submission" date="2008-01" db="EMBL/GenBank/DDBJ databases">
        <title>Complete sequence of Shewanella halifaxensis HAW-EB4.</title>
        <authorList>
            <consortium name="US DOE Joint Genome Institute"/>
            <person name="Copeland A."/>
            <person name="Lucas S."/>
            <person name="Lapidus A."/>
            <person name="Glavina del Rio T."/>
            <person name="Dalin E."/>
            <person name="Tice H."/>
            <person name="Bruce D."/>
            <person name="Goodwin L."/>
            <person name="Pitluck S."/>
            <person name="Sims D."/>
            <person name="Brettin T."/>
            <person name="Detter J.C."/>
            <person name="Han C."/>
            <person name="Kuske C.R."/>
            <person name="Schmutz J."/>
            <person name="Larimer F."/>
            <person name="Land M."/>
            <person name="Hauser L."/>
            <person name="Kyrpides N."/>
            <person name="Kim E."/>
            <person name="Zhao J.-S."/>
            <person name="Richardson P."/>
        </authorList>
    </citation>
    <scope>NUCLEOTIDE SEQUENCE [LARGE SCALE GENOMIC DNA]</scope>
    <source>
        <strain>HAW-EB4</strain>
    </source>
</reference>